<name>YTH1_ASPFU</name>
<protein>
    <recommendedName>
        <fullName>mRNA 3'-end-processing protein yth1</fullName>
    </recommendedName>
</protein>
<keyword id="KW-0479">Metal-binding</keyword>
<keyword id="KW-0507">mRNA processing</keyword>
<keyword id="KW-0539">Nucleus</keyword>
<keyword id="KW-1185">Reference proteome</keyword>
<keyword id="KW-0677">Repeat</keyword>
<keyword id="KW-0694">RNA-binding</keyword>
<keyword id="KW-0862">Zinc</keyword>
<keyword id="KW-0863">Zinc-finger</keyword>
<evidence type="ECO:0000250" key="1"/>
<evidence type="ECO:0000255" key="2">
    <source>
        <dbReference type="PROSITE-ProRule" id="PRU00723"/>
    </source>
</evidence>
<evidence type="ECO:0000256" key="3">
    <source>
        <dbReference type="SAM" id="MobiDB-lite"/>
    </source>
</evidence>
<evidence type="ECO:0000305" key="4"/>
<gene>
    <name type="primary">yth1</name>
    <name type="ORF">AFUA_1G02810</name>
</gene>
<sequence>MTADVKSAAARILSTDSSRDPSFNNFSFTPFLRKSFGFGLASDVPVCKAYSEGHCPLGPACPDRHPTPSRVTTSTTTASGLAPSTTHGSLVCKHFLKGLCKKGLKCEYLHEYNLRRMPECQSFSRSGYCPNGDDCLYQHVREQARLPPCENYDQGFCELGPLCSKRHVRRRLCKYYLAGFCPEGKACPDAHPRWSENLPKPTMRVEKTEEELERERALIREEQEREKEREREWRSERGRGGGFMRGRYRGRGRG</sequence>
<proteinExistence type="inferred from homology"/>
<comment type="function">
    <text evidence="1">Component of the cleavage factor I (CF I) involved in pre-mRNA 3'-end processing.</text>
</comment>
<comment type="subcellular location">
    <subcellularLocation>
        <location evidence="1">Nucleus</location>
    </subcellularLocation>
</comment>
<comment type="similarity">
    <text evidence="4">Belongs to the CPSF4/YTH1 family.</text>
</comment>
<dbReference type="EMBL" id="AAHF01000007">
    <property type="protein sequence ID" value="EAL87993.1"/>
    <property type="molecule type" value="Genomic_DNA"/>
</dbReference>
<dbReference type="RefSeq" id="XP_750031.1">
    <property type="nucleotide sequence ID" value="XM_744938.1"/>
</dbReference>
<dbReference type="SMR" id="Q4WKD9"/>
<dbReference type="FunCoup" id="Q4WKD9">
    <property type="interactions" value="74"/>
</dbReference>
<dbReference type="STRING" id="330879.Q4WKD9"/>
<dbReference type="EnsemblFungi" id="EAL87993">
    <property type="protein sequence ID" value="EAL87993"/>
    <property type="gene ID" value="AFUA_1G02810"/>
</dbReference>
<dbReference type="GeneID" id="3507823"/>
<dbReference type="KEGG" id="afm:AFUA_1G02810"/>
<dbReference type="VEuPathDB" id="FungiDB:Afu1g02810"/>
<dbReference type="eggNOG" id="KOG1040">
    <property type="taxonomic scope" value="Eukaryota"/>
</dbReference>
<dbReference type="HOGENOM" id="CLU_024513_1_1_1"/>
<dbReference type="InParanoid" id="Q4WKD9"/>
<dbReference type="OMA" id="SLVCKHY"/>
<dbReference type="OrthoDB" id="1914176at2759"/>
<dbReference type="Proteomes" id="UP000002530">
    <property type="component" value="Chromosome 1"/>
</dbReference>
<dbReference type="GO" id="GO:0005829">
    <property type="term" value="C:cytosol"/>
    <property type="evidence" value="ECO:0007669"/>
    <property type="project" value="EnsemblFungi"/>
</dbReference>
<dbReference type="GO" id="GO:0005847">
    <property type="term" value="C:mRNA cleavage and polyadenylation specificity factor complex"/>
    <property type="evidence" value="ECO:0007669"/>
    <property type="project" value="EnsemblFungi"/>
</dbReference>
<dbReference type="GO" id="GO:0003723">
    <property type="term" value="F:RNA binding"/>
    <property type="evidence" value="ECO:0007669"/>
    <property type="project" value="UniProtKB-KW"/>
</dbReference>
<dbReference type="GO" id="GO:0008270">
    <property type="term" value="F:zinc ion binding"/>
    <property type="evidence" value="ECO:0007669"/>
    <property type="project" value="UniProtKB-KW"/>
</dbReference>
<dbReference type="GO" id="GO:0006397">
    <property type="term" value="P:mRNA processing"/>
    <property type="evidence" value="ECO:0007669"/>
    <property type="project" value="UniProtKB-KW"/>
</dbReference>
<dbReference type="FunFam" id="4.10.1000.10:FF:000012">
    <property type="entry name" value="cleavage and polyadenylation specificity factor subunit 4"/>
    <property type="match status" value="1"/>
</dbReference>
<dbReference type="FunFam" id="4.10.1000.10:FF:000022">
    <property type="entry name" value="Zinc finger CCCH domain-containing protein 7"/>
    <property type="match status" value="1"/>
</dbReference>
<dbReference type="Gene3D" id="3.30.1370.210">
    <property type="match status" value="1"/>
</dbReference>
<dbReference type="Gene3D" id="4.10.1000.10">
    <property type="entry name" value="Zinc finger, CCCH-type"/>
    <property type="match status" value="2"/>
</dbReference>
<dbReference type="InterPro" id="IPR045348">
    <property type="entry name" value="CPSF4/Yth1"/>
</dbReference>
<dbReference type="InterPro" id="IPR000571">
    <property type="entry name" value="Znf_CCCH"/>
</dbReference>
<dbReference type="InterPro" id="IPR036855">
    <property type="entry name" value="Znf_CCCH_sf"/>
</dbReference>
<dbReference type="PANTHER" id="PTHR23102:SF24">
    <property type="entry name" value="CLEAVAGE AND POLYADENYLATION SPECIFICITY FACTOR SUBUNIT 4"/>
    <property type="match status" value="1"/>
</dbReference>
<dbReference type="PANTHER" id="PTHR23102">
    <property type="entry name" value="CLEAVAGE AND POLYADENYLATION SPECIFICITY FACTOR SUBUNIT 4-RELATED"/>
    <property type="match status" value="1"/>
</dbReference>
<dbReference type="Pfam" id="PF00642">
    <property type="entry name" value="zf-CCCH"/>
    <property type="match status" value="1"/>
</dbReference>
<dbReference type="SMART" id="SM00356">
    <property type="entry name" value="ZnF_C3H1"/>
    <property type="match status" value="5"/>
</dbReference>
<dbReference type="SUPFAM" id="SSF90229">
    <property type="entry name" value="CCCH zinc finger"/>
    <property type="match status" value="3"/>
</dbReference>
<dbReference type="PROSITE" id="PS50103">
    <property type="entry name" value="ZF_C3H1"/>
    <property type="match status" value="5"/>
</dbReference>
<reference key="1">
    <citation type="journal article" date="2005" name="Nature">
        <title>Genomic sequence of the pathogenic and allergenic filamentous fungus Aspergillus fumigatus.</title>
        <authorList>
            <person name="Nierman W.C."/>
            <person name="Pain A."/>
            <person name="Anderson M.J."/>
            <person name="Wortman J.R."/>
            <person name="Kim H.S."/>
            <person name="Arroyo J."/>
            <person name="Berriman M."/>
            <person name="Abe K."/>
            <person name="Archer D.B."/>
            <person name="Bermejo C."/>
            <person name="Bennett J.W."/>
            <person name="Bowyer P."/>
            <person name="Chen D."/>
            <person name="Collins M."/>
            <person name="Coulsen R."/>
            <person name="Davies R."/>
            <person name="Dyer P.S."/>
            <person name="Farman M.L."/>
            <person name="Fedorova N."/>
            <person name="Fedorova N.D."/>
            <person name="Feldblyum T.V."/>
            <person name="Fischer R."/>
            <person name="Fosker N."/>
            <person name="Fraser A."/>
            <person name="Garcia J.L."/>
            <person name="Garcia M.J."/>
            <person name="Goble A."/>
            <person name="Goldman G.H."/>
            <person name="Gomi K."/>
            <person name="Griffith-Jones S."/>
            <person name="Gwilliam R."/>
            <person name="Haas B.J."/>
            <person name="Haas H."/>
            <person name="Harris D.E."/>
            <person name="Horiuchi H."/>
            <person name="Huang J."/>
            <person name="Humphray S."/>
            <person name="Jimenez J."/>
            <person name="Keller N."/>
            <person name="Khouri H."/>
            <person name="Kitamoto K."/>
            <person name="Kobayashi T."/>
            <person name="Konzack S."/>
            <person name="Kulkarni R."/>
            <person name="Kumagai T."/>
            <person name="Lafton A."/>
            <person name="Latge J.-P."/>
            <person name="Li W."/>
            <person name="Lord A."/>
            <person name="Lu C."/>
            <person name="Majoros W.H."/>
            <person name="May G.S."/>
            <person name="Miller B.L."/>
            <person name="Mohamoud Y."/>
            <person name="Molina M."/>
            <person name="Monod M."/>
            <person name="Mouyna I."/>
            <person name="Mulligan S."/>
            <person name="Murphy L.D."/>
            <person name="O'Neil S."/>
            <person name="Paulsen I."/>
            <person name="Penalva M.A."/>
            <person name="Pertea M."/>
            <person name="Price C."/>
            <person name="Pritchard B.L."/>
            <person name="Quail M.A."/>
            <person name="Rabbinowitsch E."/>
            <person name="Rawlins N."/>
            <person name="Rajandream M.A."/>
            <person name="Reichard U."/>
            <person name="Renauld H."/>
            <person name="Robson G.D."/>
            <person name="Rodriguez de Cordoba S."/>
            <person name="Rodriguez-Pena J.M."/>
            <person name="Ronning C.M."/>
            <person name="Rutter S."/>
            <person name="Salzberg S.L."/>
            <person name="Sanchez M."/>
            <person name="Sanchez-Ferrero J.C."/>
            <person name="Saunders D."/>
            <person name="Seeger K."/>
            <person name="Squares R."/>
            <person name="Squares S."/>
            <person name="Takeuchi M."/>
            <person name="Tekaia F."/>
            <person name="Turner G."/>
            <person name="Vazquez de Aldana C.R."/>
            <person name="Weidman J."/>
            <person name="White O."/>
            <person name="Woodward J.R."/>
            <person name="Yu J.-H."/>
            <person name="Fraser C.M."/>
            <person name="Galagan J.E."/>
            <person name="Asai K."/>
            <person name="Machida M."/>
            <person name="Hall N."/>
            <person name="Barrell B.G."/>
            <person name="Denning D.W."/>
        </authorList>
    </citation>
    <scope>NUCLEOTIDE SEQUENCE [LARGE SCALE GENOMIC DNA]</scope>
    <source>
        <strain>ATCC MYA-4609 / CBS 101355 / FGSC A1100 / Af293</strain>
    </source>
</reference>
<accession>Q4WKD9</accession>
<organism>
    <name type="scientific">Aspergillus fumigatus (strain ATCC MYA-4609 / CBS 101355 / FGSC A1100 / Af293)</name>
    <name type="common">Neosartorya fumigata</name>
    <dbReference type="NCBI Taxonomy" id="330879"/>
    <lineage>
        <taxon>Eukaryota</taxon>
        <taxon>Fungi</taxon>
        <taxon>Dikarya</taxon>
        <taxon>Ascomycota</taxon>
        <taxon>Pezizomycotina</taxon>
        <taxon>Eurotiomycetes</taxon>
        <taxon>Eurotiomycetidae</taxon>
        <taxon>Eurotiales</taxon>
        <taxon>Aspergillaceae</taxon>
        <taxon>Aspergillus</taxon>
        <taxon>Aspergillus subgen. Fumigati</taxon>
    </lineage>
</organism>
<feature type="chain" id="PRO_0000238532" description="mRNA 3'-end-processing protein yth1">
    <location>
        <begin position="1"/>
        <end position="254"/>
    </location>
</feature>
<feature type="zinc finger region" description="C3H1-type 1" evidence="2">
    <location>
        <begin position="41"/>
        <end position="68"/>
    </location>
</feature>
<feature type="zinc finger region" description="C3H1-type 2" evidence="2">
    <location>
        <begin position="91"/>
        <end position="113"/>
    </location>
</feature>
<feature type="zinc finger region" description="C3H1-type 3" evidence="2">
    <location>
        <begin position="114"/>
        <end position="142"/>
    </location>
</feature>
<feature type="zinc finger region" description="C3H1-type 4" evidence="2">
    <location>
        <begin position="143"/>
        <end position="167"/>
    </location>
</feature>
<feature type="zinc finger region" description="C3H1-type 5" evidence="2">
    <location>
        <begin position="168"/>
        <end position="194"/>
    </location>
</feature>
<feature type="region of interest" description="Disordered" evidence="3">
    <location>
        <begin position="65"/>
        <end position="84"/>
    </location>
</feature>
<feature type="region of interest" description="Disordered" evidence="3">
    <location>
        <begin position="198"/>
        <end position="254"/>
    </location>
</feature>
<feature type="compositionally biased region" description="Low complexity" evidence="3">
    <location>
        <begin position="68"/>
        <end position="84"/>
    </location>
</feature>
<feature type="compositionally biased region" description="Basic and acidic residues" evidence="3">
    <location>
        <begin position="203"/>
        <end position="239"/>
    </location>
</feature>